<feature type="chain" id="PRO_0000326849" description="Acylphosphatase">
    <location>
        <begin position="1"/>
        <end position="88"/>
    </location>
</feature>
<feature type="domain" description="Acylphosphatase-like" evidence="1">
    <location>
        <begin position="3"/>
        <end position="88"/>
    </location>
</feature>
<feature type="active site" evidence="1">
    <location>
        <position position="18"/>
    </location>
</feature>
<feature type="active site" evidence="1">
    <location>
        <position position="36"/>
    </location>
</feature>
<sequence length="88" mass="9062">MQAARFVVSGVVQGVWYRASTRERAVALGLVGHARNQTDGSVEVVAAGSAAALGALEAWLWQGPPAATVEAVTRTPCAVPPTEDFVTG</sequence>
<name>ACYP_XANOR</name>
<protein>
    <recommendedName>
        <fullName>Acylphosphatase</fullName>
        <ecNumber>3.6.1.7</ecNumber>
    </recommendedName>
    <alternativeName>
        <fullName>Acylphosphate phosphohydrolase</fullName>
    </alternativeName>
</protein>
<organism>
    <name type="scientific">Xanthomonas oryzae pv. oryzae (strain KACC10331 / KXO85)</name>
    <dbReference type="NCBI Taxonomy" id="291331"/>
    <lineage>
        <taxon>Bacteria</taxon>
        <taxon>Pseudomonadati</taxon>
        <taxon>Pseudomonadota</taxon>
        <taxon>Gammaproteobacteria</taxon>
        <taxon>Lysobacterales</taxon>
        <taxon>Lysobacteraceae</taxon>
        <taxon>Xanthomonas</taxon>
    </lineage>
</organism>
<reference key="1">
    <citation type="journal article" date="2005" name="Nucleic Acids Res.">
        <title>The genome sequence of Xanthomonas oryzae pathovar oryzae KACC10331, the bacterial blight pathogen of rice.</title>
        <authorList>
            <person name="Lee B.-M."/>
            <person name="Park Y.-J."/>
            <person name="Park D.-S."/>
            <person name="Kang H.-W."/>
            <person name="Kim J.-G."/>
            <person name="Song E.-S."/>
            <person name="Park I.-C."/>
            <person name="Yoon U.-H."/>
            <person name="Hahn J.-H."/>
            <person name="Koo B.-S."/>
            <person name="Lee G.-B."/>
            <person name="Kim H."/>
            <person name="Park H.-S."/>
            <person name="Yoon K.-O."/>
            <person name="Kim J.-H."/>
            <person name="Jung C.-H."/>
            <person name="Koh N.-H."/>
            <person name="Seo J.-S."/>
            <person name="Go S.-J."/>
        </authorList>
    </citation>
    <scope>NUCLEOTIDE SEQUENCE [LARGE SCALE GENOMIC DNA]</scope>
    <source>
        <strain>KACC10331 / KXO85</strain>
    </source>
</reference>
<dbReference type="EC" id="3.6.1.7"/>
<dbReference type="EMBL" id="AE013598">
    <property type="protein sequence ID" value="AAW76867.1"/>
    <property type="status" value="ALT_INIT"/>
    <property type="molecule type" value="Genomic_DNA"/>
</dbReference>
<dbReference type="SMR" id="Q5GWQ4"/>
<dbReference type="STRING" id="291331.XOO3613"/>
<dbReference type="KEGG" id="xoo:XOO3613"/>
<dbReference type="HOGENOM" id="CLU_141932_1_3_6"/>
<dbReference type="Proteomes" id="UP000006735">
    <property type="component" value="Chromosome"/>
</dbReference>
<dbReference type="GO" id="GO:0003998">
    <property type="term" value="F:acylphosphatase activity"/>
    <property type="evidence" value="ECO:0007669"/>
    <property type="project" value="UniProtKB-EC"/>
</dbReference>
<dbReference type="Gene3D" id="3.30.70.100">
    <property type="match status" value="1"/>
</dbReference>
<dbReference type="InterPro" id="IPR020456">
    <property type="entry name" value="Acylphosphatase"/>
</dbReference>
<dbReference type="InterPro" id="IPR001792">
    <property type="entry name" value="Acylphosphatase-like_dom"/>
</dbReference>
<dbReference type="InterPro" id="IPR036046">
    <property type="entry name" value="Acylphosphatase-like_dom_sf"/>
</dbReference>
<dbReference type="NCBIfam" id="NF011018">
    <property type="entry name" value="PRK14446.1"/>
    <property type="match status" value="1"/>
</dbReference>
<dbReference type="PANTHER" id="PTHR47268">
    <property type="entry name" value="ACYLPHOSPHATASE"/>
    <property type="match status" value="1"/>
</dbReference>
<dbReference type="PANTHER" id="PTHR47268:SF4">
    <property type="entry name" value="ACYLPHOSPHATASE"/>
    <property type="match status" value="1"/>
</dbReference>
<dbReference type="Pfam" id="PF00708">
    <property type="entry name" value="Acylphosphatase"/>
    <property type="match status" value="1"/>
</dbReference>
<dbReference type="SUPFAM" id="SSF54975">
    <property type="entry name" value="Acylphosphatase/BLUF domain-like"/>
    <property type="match status" value="1"/>
</dbReference>
<dbReference type="PROSITE" id="PS51160">
    <property type="entry name" value="ACYLPHOSPHATASE_3"/>
    <property type="match status" value="1"/>
</dbReference>
<accession>Q5GWQ4</accession>
<proteinExistence type="inferred from homology"/>
<gene>
    <name type="primary">acyP</name>
    <name type="ordered locus">XOO3613</name>
</gene>
<keyword id="KW-0378">Hydrolase</keyword>
<keyword id="KW-1185">Reference proteome</keyword>
<evidence type="ECO:0000255" key="1">
    <source>
        <dbReference type="PROSITE-ProRule" id="PRU00520"/>
    </source>
</evidence>
<evidence type="ECO:0000305" key="2"/>
<comment type="catalytic activity">
    <reaction>
        <text>an acyl phosphate + H2O = a carboxylate + phosphate + H(+)</text>
        <dbReference type="Rhea" id="RHEA:14965"/>
        <dbReference type="ChEBI" id="CHEBI:15377"/>
        <dbReference type="ChEBI" id="CHEBI:15378"/>
        <dbReference type="ChEBI" id="CHEBI:29067"/>
        <dbReference type="ChEBI" id="CHEBI:43474"/>
        <dbReference type="ChEBI" id="CHEBI:59918"/>
        <dbReference type="EC" id="3.6.1.7"/>
    </reaction>
</comment>
<comment type="similarity">
    <text evidence="2">Belongs to the acylphosphatase family.</text>
</comment>
<comment type="sequence caution" evidence="2">
    <conflict type="erroneous initiation">
        <sequence resource="EMBL-CDS" id="AAW76867"/>
    </conflict>
</comment>